<proteinExistence type="evidence at protein level"/>
<reference key="1">
    <citation type="journal article" date="2002" name="Gene">
        <title>Molecular cloning and initial characterization of the MG61/PORC gene, the human homologue of the Drosophila segment polarity gene Porcupine.</title>
        <authorList>
            <person name="Caricasole A."/>
            <person name="Ferraro T."/>
            <person name="Rimland J.M."/>
            <person name="Terstappen G.C."/>
        </authorList>
    </citation>
    <scope>NUCLEOTIDE SEQUENCE [MRNA] (ISOFORMS 1; 2; 3 AND 4)</scope>
    <scope>FUNCTION IN WNT PROTEINS PROCESSING</scope>
    <scope>ALTERNATIVE SPLICING</scope>
    <scope>TISSUE SPECIFICITY</scope>
    <source>
        <tissue>Hippocampus</tissue>
    </source>
</reference>
<reference key="2">
    <citation type="journal article" date="2004" name="Nat. Genet.">
        <title>Complete sequencing and characterization of 21,243 full-length human cDNAs.</title>
        <authorList>
            <person name="Ota T."/>
            <person name="Suzuki Y."/>
            <person name="Nishikawa T."/>
            <person name="Otsuki T."/>
            <person name="Sugiyama T."/>
            <person name="Irie R."/>
            <person name="Wakamatsu A."/>
            <person name="Hayashi K."/>
            <person name="Sato H."/>
            <person name="Nagai K."/>
            <person name="Kimura K."/>
            <person name="Makita H."/>
            <person name="Sekine M."/>
            <person name="Obayashi M."/>
            <person name="Nishi T."/>
            <person name="Shibahara T."/>
            <person name="Tanaka T."/>
            <person name="Ishii S."/>
            <person name="Yamamoto J."/>
            <person name="Saito K."/>
            <person name="Kawai Y."/>
            <person name="Isono Y."/>
            <person name="Nakamura Y."/>
            <person name="Nagahari K."/>
            <person name="Murakami K."/>
            <person name="Yasuda T."/>
            <person name="Iwayanagi T."/>
            <person name="Wagatsuma M."/>
            <person name="Shiratori A."/>
            <person name="Sudo H."/>
            <person name="Hosoiri T."/>
            <person name="Kaku Y."/>
            <person name="Kodaira H."/>
            <person name="Kondo H."/>
            <person name="Sugawara M."/>
            <person name="Takahashi M."/>
            <person name="Kanda K."/>
            <person name="Yokoi T."/>
            <person name="Furuya T."/>
            <person name="Kikkawa E."/>
            <person name="Omura Y."/>
            <person name="Abe K."/>
            <person name="Kamihara K."/>
            <person name="Katsuta N."/>
            <person name="Sato K."/>
            <person name="Tanikawa M."/>
            <person name="Yamazaki M."/>
            <person name="Ninomiya K."/>
            <person name="Ishibashi T."/>
            <person name="Yamashita H."/>
            <person name="Murakawa K."/>
            <person name="Fujimori K."/>
            <person name="Tanai H."/>
            <person name="Kimata M."/>
            <person name="Watanabe M."/>
            <person name="Hiraoka S."/>
            <person name="Chiba Y."/>
            <person name="Ishida S."/>
            <person name="Ono Y."/>
            <person name="Takiguchi S."/>
            <person name="Watanabe S."/>
            <person name="Yosida M."/>
            <person name="Hotuta T."/>
            <person name="Kusano J."/>
            <person name="Kanehori K."/>
            <person name="Takahashi-Fujii A."/>
            <person name="Hara H."/>
            <person name="Tanase T.-O."/>
            <person name="Nomura Y."/>
            <person name="Togiya S."/>
            <person name="Komai F."/>
            <person name="Hara R."/>
            <person name="Takeuchi K."/>
            <person name="Arita M."/>
            <person name="Imose N."/>
            <person name="Musashino K."/>
            <person name="Yuuki H."/>
            <person name="Oshima A."/>
            <person name="Sasaki N."/>
            <person name="Aotsuka S."/>
            <person name="Yoshikawa Y."/>
            <person name="Matsunawa H."/>
            <person name="Ichihara T."/>
            <person name="Shiohata N."/>
            <person name="Sano S."/>
            <person name="Moriya S."/>
            <person name="Momiyama H."/>
            <person name="Satoh N."/>
            <person name="Takami S."/>
            <person name="Terashima Y."/>
            <person name="Suzuki O."/>
            <person name="Nakagawa S."/>
            <person name="Senoh A."/>
            <person name="Mizoguchi H."/>
            <person name="Goto Y."/>
            <person name="Shimizu F."/>
            <person name="Wakebe H."/>
            <person name="Hishigaki H."/>
            <person name="Watanabe T."/>
            <person name="Sugiyama A."/>
            <person name="Takemoto M."/>
            <person name="Kawakami B."/>
            <person name="Yamazaki M."/>
            <person name="Watanabe K."/>
            <person name="Kumagai A."/>
            <person name="Itakura S."/>
            <person name="Fukuzumi Y."/>
            <person name="Fujimori Y."/>
            <person name="Komiyama M."/>
            <person name="Tashiro H."/>
            <person name="Tanigami A."/>
            <person name="Fujiwara T."/>
            <person name="Ono T."/>
            <person name="Yamada K."/>
            <person name="Fujii Y."/>
            <person name="Ozaki K."/>
            <person name="Hirao M."/>
            <person name="Ohmori Y."/>
            <person name="Kawabata A."/>
            <person name="Hikiji T."/>
            <person name="Kobatake N."/>
            <person name="Inagaki H."/>
            <person name="Ikema Y."/>
            <person name="Okamoto S."/>
            <person name="Okitani R."/>
            <person name="Kawakami T."/>
            <person name="Noguchi S."/>
            <person name="Itoh T."/>
            <person name="Shigeta K."/>
            <person name="Senba T."/>
            <person name="Matsumura K."/>
            <person name="Nakajima Y."/>
            <person name="Mizuno T."/>
            <person name="Morinaga M."/>
            <person name="Sasaki M."/>
            <person name="Togashi T."/>
            <person name="Oyama M."/>
            <person name="Hata H."/>
            <person name="Watanabe M."/>
            <person name="Komatsu T."/>
            <person name="Mizushima-Sugano J."/>
            <person name="Satoh T."/>
            <person name="Shirai Y."/>
            <person name="Takahashi Y."/>
            <person name="Nakagawa K."/>
            <person name="Okumura K."/>
            <person name="Nagase T."/>
            <person name="Nomura N."/>
            <person name="Kikuchi H."/>
            <person name="Masuho Y."/>
            <person name="Yamashita R."/>
            <person name="Nakai K."/>
            <person name="Yada T."/>
            <person name="Nakamura Y."/>
            <person name="Ohara O."/>
            <person name="Isogai T."/>
            <person name="Sugano S."/>
        </authorList>
    </citation>
    <scope>NUCLEOTIDE SEQUENCE [LARGE SCALE MRNA] (ISOFORMS 1 AND 5)</scope>
</reference>
<reference key="3">
    <citation type="journal article" date="2005" name="Nature">
        <title>The DNA sequence of the human X chromosome.</title>
        <authorList>
            <person name="Ross M.T."/>
            <person name="Grafham D.V."/>
            <person name="Coffey A.J."/>
            <person name="Scherer S."/>
            <person name="McLay K."/>
            <person name="Muzny D."/>
            <person name="Platzer M."/>
            <person name="Howell G.R."/>
            <person name="Burrows C."/>
            <person name="Bird C.P."/>
            <person name="Frankish A."/>
            <person name="Lovell F.L."/>
            <person name="Howe K.L."/>
            <person name="Ashurst J.L."/>
            <person name="Fulton R.S."/>
            <person name="Sudbrak R."/>
            <person name="Wen G."/>
            <person name="Jones M.C."/>
            <person name="Hurles M.E."/>
            <person name="Andrews T.D."/>
            <person name="Scott C.E."/>
            <person name="Searle S."/>
            <person name="Ramser J."/>
            <person name="Whittaker A."/>
            <person name="Deadman R."/>
            <person name="Carter N.P."/>
            <person name="Hunt S.E."/>
            <person name="Chen R."/>
            <person name="Cree A."/>
            <person name="Gunaratne P."/>
            <person name="Havlak P."/>
            <person name="Hodgson A."/>
            <person name="Metzker M.L."/>
            <person name="Richards S."/>
            <person name="Scott G."/>
            <person name="Steffen D."/>
            <person name="Sodergren E."/>
            <person name="Wheeler D.A."/>
            <person name="Worley K.C."/>
            <person name="Ainscough R."/>
            <person name="Ambrose K.D."/>
            <person name="Ansari-Lari M.A."/>
            <person name="Aradhya S."/>
            <person name="Ashwell R.I."/>
            <person name="Babbage A.K."/>
            <person name="Bagguley C.L."/>
            <person name="Ballabio A."/>
            <person name="Banerjee R."/>
            <person name="Barker G.E."/>
            <person name="Barlow K.F."/>
            <person name="Barrett I.P."/>
            <person name="Bates K.N."/>
            <person name="Beare D.M."/>
            <person name="Beasley H."/>
            <person name="Beasley O."/>
            <person name="Beck A."/>
            <person name="Bethel G."/>
            <person name="Blechschmidt K."/>
            <person name="Brady N."/>
            <person name="Bray-Allen S."/>
            <person name="Bridgeman A.M."/>
            <person name="Brown A.J."/>
            <person name="Brown M.J."/>
            <person name="Bonnin D."/>
            <person name="Bruford E.A."/>
            <person name="Buhay C."/>
            <person name="Burch P."/>
            <person name="Burford D."/>
            <person name="Burgess J."/>
            <person name="Burrill W."/>
            <person name="Burton J."/>
            <person name="Bye J.M."/>
            <person name="Carder C."/>
            <person name="Carrel L."/>
            <person name="Chako J."/>
            <person name="Chapman J.C."/>
            <person name="Chavez D."/>
            <person name="Chen E."/>
            <person name="Chen G."/>
            <person name="Chen Y."/>
            <person name="Chen Z."/>
            <person name="Chinault C."/>
            <person name="Ciccodicola A."/>
            <person name="Clark S.Y."/>
            <person name="Clarke G."/>
            <person name="Clee C.M."/>
            <person name="Clegg S."/>
            <person name="Clerc-Blankenburg K."/>
            <person name="Clifford K."/>
            <person name="Cobley V."/>
            <person name="Cole C.G."/>
            <person name="Conquer J.S."/>
            <person name="Corby N."/>
            <person name="Connor R.E."/>
            <person name="David R."/>
            <person name="Davies J."/>
            <person name="Davis C."/>
            <person name="Davis J."/>
            <person name="Delgado O."/>
            <person name="Deshazo D."/>
            <person name="Dhami P."/>
            <person name="Ding Y."/>
            <person name="Dinh H."/>
            <person name="Dodsworth S."/>
            <person name="Draper H."/>
            <person name="Dugan-Rocha S."/>
            <person name="Dunham A."/>
            <person name="Dunn M."/>
            <person name="Durbin K.J."/>
            <person name="Dutta I."/>
            <person name="Eades T."/>
            <person name="Ellwood M."/>
            <person name="Emery-Cohen A."/>
            <person name="Errington H."/>
            <person name="Evans K.L."/>
            <person name="Faulkner L."/>
            <person name="Francis F."/>
            <person name="Frankland J."/>
            <person name="Fraser A.E."/>
            <person name="Galgoczy P."/>
            <person name="Gilbert J."/>
            <person name="Gill R."/>
            <person name="Gloeckner G."/>
            <person name="Gregory S.G."/>
            <person name="Gribble S."/>
            <person name="Griffiths C."/>
            <person name="Grocock R."/>
            <person name="Gu Y."/>
            <person name="Gwilliam R."/>
            <person name="Hamilton C."/>
            <person name="Hart E.A."/>
            <person name="Hawes A."/>
            <person name="Heath P.D."/>
            <person name="Heitmann K."/>
            <person name="Hennig S."/>
            <person name="Hernandez J."/>
            <person name="Hinzmann B."/>
            <person name="Ho S."/>
            <person name="Hoffs M."/>
            <person name="Howden P.J."/>
            <person name="Huckle E.J."/>
            <person name="Hume J."/>
            <person name="Hunt P.J."/>
            <person name="Hunt A.R."/>
            <person name="Isherwood J."/>
            <person name="Jacob L."/>
            <person name="Johnson D."/>
            <person name="Jones S."/>
            <person name="de Jong P.J."/>
            <person name="Joseph S.S."/>
            <person name="Keenan S."/>
            <person name="Kelly S."/>
            <person name="Kershaw J.K."/>
            <person name="Khan Z."/>
            <person name="Kioschis P."/>
            <person name="Klages S."/>
            <person name="Knights A.J."/>
            <person name="Kosiura A."/>
            <person name="Kovar-Smith C."/>
            <person name="Laird G.K."/>
            <person name="Langford C."/>
            <person name="Lawlor S."/>
            <person name="Leversha M."/>
            <person name="Lewis L."/>
            <person name="Liu W."/>
            <person name="Lloyd C."/>
            <person name="Lloyd D.M."/>
            <person name="Loulseged H."/>
            <person name="Loveland J.E."/>
            <person name="Lovell J.D."/>
            <person name="Lozado R."/>
            <person name="Lu J."/>
            <person name="Lyne R."/>
            <person name="Ma J."/>
            <person name="Maheshwari M."/>
            <person name="Matthews L.H."/>
            <person name="McDowall J."/>
            <person name="McLaren S."/>
            <person name="McMurray A."/>
            <person name="Meidl P."/>
            <person name="Meitinger T."/>
            <person name="Milne S."/>
            <person name="Miner G."/>
            <person name="Mistry S.L."/>
            <person name="Morgan M."/>
            <person name="Morris S."/>
            <person name="Mueller I."/>
            <person name="Mullikin J.C."/>
            <person name="Nguyen N."/>
            <person name="Nordsiek G."/>
            <person name="Nyakatura G."/>
            <person name="O'dell C.N."/>
            <person name="Okwuonu G."/>
            <person name="Palmer S."/>
            <person name="Pandian R."/>
            <person name="Parker D."/>
            <person name="Parrish J."/>
            <person name="Pasternak S."/>
            <person name="Patel D."/>
            <person name="Pearce A.V."/>
            <person name="Pearson D.M."/>
            <person name="Pelan S.E."/>
            <person name="Perez L."/>
            <person name="Porter K.M."/>
            <person name="Ramsey Y."/>
            <person name="Reichwald K."/>
            <person name="Rhodes S."/>
            <person name="Ridler K.A."/>
            <person name="Schlessinger D."/>
            <person name="Schueler M.G."/>
            <person name="Sehra H.K."/>
            <person name="Shaw-Smith C."/>
            <person name="Shen H."/>
            <person name="Sheridan E.M."/>
            <person name="Shownkeen R."/>
            <person name="Skuce C.D."/>
            <person name="Smith M.L."/>
            <person name="Sotheran E.C."/>
            <person name="Steingruber H.E."/>
            <person name="Steward C.A."/>
            <person name="Storey R."/>
            <person name="Swann R.M."/>
            <person name="Swarbreck D."/>
            <person name="Tabor P.E."/>
            <person name="Taudien S."/>
            <person name="Taylor T."/>
            <person name="Teague B."/>
            <person name="Thomas K."/>
            <person name="Thorpe A."/>
            <person name="Timms K."/>
            <person name="Tracey A."/>
            <person name="Trevanion S."/>
            <person name="Tromans A.C."/>
            <person name="d'Urso M."/>
            <person name="Verduzco D."/>
            <person name="Villasana D."/>
            <person name="Waldron L."/>
            <person name="Wall M."/>
            <person name="Wang Q."/>
            <person name="Warren J."/>
            <person name="Warry G.L."/>
            <person name="Wei X."/>
            <person name="West A."/>
            <person name="Whitehead S.L."/>
            <person name="Whiteley M.N."/>
            <person name="Wilkinson J.E."/>
            <person name="Willey D.L."/>
            <person name="Williams G."/>
            <person name="Williams L."/>
            <person name="Williamson A."/>
            <person name="Williamson H."/>
            <person name="Wilming L."/>
            <person name="Woodmansey R.L."/>
            <person name="Wray P.W."/>
            <person name="Yen J."/>
            <person name="Zhang J."/>
            <person name="Zhou J."/>
            <person name="Zoghbi H."/>
            <person name="Zorilla S."/>
            <person name="Buck D."/>
            <person name="Reinhardt R."/>
            <person name="Poustka A."/>
            <person name="Rosenthal A."/>
            <person name="Lehrach H."/>
            <person name="Meindl A."/>
            <person name="Minx P.J."/>
            <person name="Hillier L.W."/>
            <person name="Willard H.F."/>
            <person name="Wilson R.K."/>
            <person name="Waterston R.H."/>
            <person name="Rice C.M."/>
            <person name="Vaudin M."/>
            <person name="Coulson A."/>
            <person name="Nelson D.L."/>
            <person name="Weinstock G."/>
            <person name="Sulston J.E."/>
            <person name="Durbin R.M."/>
            <person name="Hubbard T."/>
            <person name="Gibbs R.A."/>
            <person name="Beck S."/>
            <person name="Rogers J."/>
            <person name="Bentley D.R."/>
        </authorList>
    </citation>
    <scope>NUCLEOTIDE SEQUENCE [LARGE SCALE GENOMIC DNA]</scope>
</reference>
<reference key="4">
    <citation type="submission" date="2005-07" db="EMBL/GenBank/DDBJ databases">
        <authorList>
            <person name="Mural R.J."/>
            <person name="Istrail S."/>
            <person name="Sutton G.G."/>
            <person name="Florea L."/>
            <person name="Halpern A.L."/>
            <person name="Mobarry C.M."/>
            <person name="Lippert R."/>
            <person name="Walenz B."/>
            <person name="Shatkay H."/>
            <person name="Dew I."/>
            <person name="Miller J.R."/>
            <person name="Flanigan M.J."/>
            <person name="Edwards N.J."/>
            <person name="Bolanos R."/>
            <person name="Fasulo D."/>
            <person name="Halldorsson B.V."/>
            <person name="Hannenhalli S."/>
            <person name="Turner R."/>
            <person name="Yooseph S."/>
            <person name="Lu F."/>
            <person name="Nusskern D.R."/>
            <person name="Shue B.C."/>
            <person name="Zheng X.H."/>
            <person name="Zhong F."/>
            <person name="Delcher A.L."/>
            <person name="Huson D.H."/>
            <person name="Kravitz S.A."/>
            <person name="Mouchard L."/>
            <person name="Reinert K."/>
            <person name="Remington K.A."/>
            <person name="Clark A.G."/>
            <person name="Waterman M.S."/>
            <person name="Eichler E.E."/>
            <person name="Adams M.D."/>
            <person name="Hunkapiller M.W."/>
            <person name="Myers E.W."/>
            <person name="Venter J.C."/>
        </authorList>
    </citation>
    <scope>NUCLEOTIDE SEQUENCE [LARGE SCALE GENOMIC DNA]</scope>
</reference>
<reference key="5">
    <citation type="journal article" date="2004" name="Genome Res.">
        <title>The status, quality, and expansion of the NIH full-length cDNA project: the Mammalian Gene Collection (MGC).</title>
        <authorList>
            <consortium name="The MGC Project Team"/>
        </authorList>
    </citation>
    <scope>NUCLEOTIDE SEQUENCE [LARGE SCALE MRNA] (ISOFORM 2)</scope>
    <source>
        <tissue>Kidney</tissue>
    </source>
</reference>
<reference key="6">
    <citation type="submission" date="1993-01" db="EMBL/GenBank/DDBJ databases">
        <authorList>
            <person name="Geraghty M.T."/>
        </authorList>
    </citation>
    <scope>NUCLEOTIDE SEQUENCE [MRNA] OF 63-461 (ISOFORM 1)</scope>
    <source>
        <tissue>Retina</tissue>
    </source>
</reference>
<reference key="7">
    <citation type="journal article" date="2007" name="Nat. Genet.">
        <title>Deficiency of PORCN, a regulator of Wnt signaling, is associated with focal dermal hypoplasia.</title>
        <authorList>
            <person name="Grzeschik K.-H."/>
            <person name="Bornholdt D."/>
            <person name="Oeffner F."/>
            <person name="Koenig A."/>
            <person name="del Carmen Boente M."/>
            <person name="Enders H."/>
            <person name="Fritz B."/>
            <person name="Hertl M."/>
            <person name="Grasshoff U."/>
            <person name="Hoefling K."/>
            <person name="Oji V."/>
            <person name="Paradisi M."/>
            <person name="Schuchardt C."/>
            <person name="Szalai Z."/>
            <person name="Tadini G."/>
            <person name="Traupe H."/>
            <person name="Happle R."/>
        </authorList>
    </citation>
    <scope>INVOLVEMENT IN FODH</scope>
</reference>
<reference key="8">
    <citation type="journal article" date="2010" name="J. Cell Sci.">
        <title>WLS-dependent secretion of WNT3A requires Ser209 acylation and vacuolar acidification.</title>
        <authorList>
            <person name="Coombs G.S."/>
            <person name="Yu J."/>
            <person name="Canning C.A."/>
            <person name="Veltri C.A."/>
            <person name="Covey T.M."/>
            <person name="Cheong J.K."/>
            <person name="Utomo V."/>
            <person name="Banerjee N."/>
            <person name="Zhang Z.H."/>
            <person name="Jadulco R.C."/>
            <person name="Concepcion G.P."/>
            <person name="Bugni T.S."/>
            <person name="Harper M.K."/>
            <person name="Mihalek I."/>
            <person name="Jones C.M."/>
            <person name="Ireland C.M."/>
            <person name="Virshup D.M."/>
        </authorList>
    </citation>
    <scope>FUNCTION</scope>
</reference>
<reference key="9">
    <citation type="journal article" date="2014" name="Nat. Chem. Biol.">
        <title>Single-cell imaging of Wnt palmitoylation by the acyltransferase porcupine.</title>
        <authorList>
            <person name="Gao X."/>
            <person name="Hannoush R.N."/>
        </authorList>
    </citation>
    <scope>FUNCTION</scope>
    <scope>PALMITOYLATION AT CYS-187</scope>
    <scope>ACTIVE SITE</scope>
    <scope>MUTAGENESIS OF CYS-187 AND HIS-341</scope>
</reference>
<reference key="10">
    <citation type="journal article" date="2007" name="Nat. Genet.">
        <title>Mutations in X-linked PORCN, a putative regulator of Wnt signaling, cause focal dermal hypoplasia.</title>
        <authorList>
            <person name="Wang X."/>
            <person name="Reid Sutton V."/>
            <person name="Omar Peraza-Llanes J."/>
            <person name="Yu Z."/>
            <person name="Rosetta R."/>
            <person name="Kou Y.-C."/>
            <person name="Eble T.N."/>
            <person name="Patel A."/>
            <person name="Thaller C."/>
            <person name="Fang P."/>
            <person name="Van den Veyver I.B."/>
        </authorList>
    </citation>
    <scope>VARIANTS FODH ARG-60 AND GLY-365</scope>
</reference>
<reference key="11">
    <citation type="journal article" date="2008" name="Clin. Genet.">
        <title>Three novel mutations in the PORCN gene underlying focal dermal hypoplasia.</title>
        <authorList>
            <person name="Leoyklang P."/>
            <person name="Suphapeetiporn K."/>
            <person name="Wananukul S."/>
            <person name="Shotelersuk V."/>
        </authorList>
    </citation>
    <scope>VARIANT FODH GLN-365</scope>
    <scope>VARIANT CYS-228</scope>
</reference>
<reference key="12">
    <citation type="journal article" date="2009" name="Clin. Genet.">
        <title>Novel PORCN mutations in focal dermal hypoplasia.</title>
        <authorList>
            <person name="Froyen G."/>
            <person name="Govaerts K."/>
            <person name="Van Esch H."/>
            <person name="Verbeeck J."/>
            <person name="Tuomi M.L."/>
            <person name="Heikkila H."/>
            <person name="Torniainen S."/>
            <person name="Devriendt K."/>
            <person name="Fryns J.P."/>
            <person name="Marynen P."/>
            <person name="Jarvela I."/>
            <person name="Ala-Mello S."/>
        </authorList>
    </citation>
    <scope>VARIANTS FODH ARG-331 AND GLN-365</scope>
</reference>
<reference key="13">
    <citation type="journal article" date="2009" name="Eur. J. Hum. Genet.">
        <title>Goltz-Gorlin (focal dermal hypoplasia) and the microphthalmia with linear skin defects (MLS) syndrome: no evidence of genetic overlap.</title>
        <authorList>
            <person name="Harmsen M.B."/>
            <person name="Azzarello-Burri S."/>
            <person name="Garcia Gonzalez M.M."/>
            <person name="Gillessen-Kaesbach G."/>
            <person name="Meinecke P."/>
            <person name="Muller D."/>
            <person name="Rauch A."/>
            <person name="Rossier E."/>
            <person name="Seemanova E."/>
            <person name="Spaich C."/>
            <person name="Steiner B."/>
            <person name="Wieczorek D."/>
            <person name="Zenker M."/>
            <person name="Kutsche K."/>
        </authorList>
    </citation>
    <scope>VARIANTS FODH VAL-361 AND TYR-385</scope>
</reference>
<reference key="14">
    <citation type="journal article" date="2009" name="Hum. Mutat.">
        <title>PORCN mutations in focal dermal hypoplasia: coping with lethality.</title>
        <authorList>
            <person name="Bornholdt D."/>
            <person name="Oeffner F."/>
            <person name="Koenig A."/>
            <person name="Happle R."/>
            <person name="Alanay Y."/>
            <person name="Ascherman J."/>
            <person name="Benke P.J."/>
            <person name="Boente M.C."/>
            <person name="van der Burgt I."/>
            <person name="Chassaing N."/>
            <person name="Ellis I."/>
            <person name="Francisco C.R.I."/>
            <person name="Della Giovanna P."/>
            <person name="Hamel B."/>
            <person name="Has C."/>
            <person name="Heinelt K."/>
            <person name="Janecke A."/>
            <person name="Kastrup W."/>
            <person name="Loeys B."/>
            <person name="Lohrisch I."/>
            <person name="Marcelis C."/>
            <person name="Mehraein Y."/>
            <person name="Nicolas M.E.O."/>
            <person name="Pagliarini D."/>
            <person name="Paradisi M."/>
            <person name="Patrizi A."/>
            <person name="Piccione M."/>
            <person name="Piza-Katzer H."/>
            <person name="Prager B."/>
            <person name="Prescott K."/>
            <person name="Strien J."/>
            <person name="Utine G.E."/>
            <person name="Zeller M.S."/>
            <person name="Grzeschik K.-H."/>
        </authorList>
    </citation>
    <scope>VARIANTS FODH PHE-136; ARG-168; GLU-258; LEU-341; GLN-365; GLY-365; ARG-385 AND ARG-439</scope>
</reference>
<reference key="15">
    <citation type="journal article" date="2009" name="J. Med. Genet.">
        <title>Phenotype and genotype in 17 patients with Goltz-Gorlin syndrome.</title>
        <authorList>
            <person name="Maas S.M."/>
            <person name="Lombardi M.P."/>
            <person name="van Essen A.J."/>
            <person name="Wakeling E.L."/>
            <person name="Castle B."/>
            <person name="Temple I.K."/>
            <person name="Kumar V.K."/>
            <person name="Writzl K."/>
            <person name="Hennekam R.C."/>
        </authorList>
    </citation>
    <scope>VARIANTS FODH ARG-168; LEU-297; GLN-365 AND PRO-374</scope>
</reference>
<reference key="16">
    <citation type="journal article" date="2011" name="Hum. Mutat.">
        <title>Mutation update for the PORCN gene.</title>
        <authorList>
            <person name="Lombardi M.P."/>
            <person name="Bulk S."/>
            <person name="Celli J."/>
            <person name="Lampe A."/>
            <person name="Gabbett M.T."/>
            <person name="Ousager L.B."/>
            <person name="van der Smagt J.J."/>
            <person name="Soller M."/>
            <person name="Stattin E.L."/>
            <person name="Mannens M.A."/>
            <person name="Smigiel R."/>
            <person name="Hennekam R.C."/>
        </authorList>
    </citation>
    <scope>VARIANTS FODH TYR-252 AND GLN-365</scope>
</reference>
<dbReference type="EC" id="2.3.1.250" evidence="1"/>
<dbReference type="EMBL" id="AF317058">
    <property type="protein sequence ID" value="AAG39628.1"/>
    <property type="molecule type" value="mRNA"/>
</dbReference>
<dbReference type="EMBL" id="AF317059">
    <property type="protein sequence ID" value="AAG39629.1"/>
    <property type="molecule type" value="mRNA"/>
</dbReference>
<dbReference type="EMBL" id="AF317060">
    <property type="protein sequence ID" value="AAG39630.1"/>
    <property type="molecule type" value="mRNA"/>
</dbReference>
<dbReference type="EMBL" id="AF317061">
    <property type="protein sequence ID" value="AAG39631.1"/>
    <property type="molecule type" value="mRNA"/>
</dbReference>
<dbReference type="EMBL" id="AK314745">
    <property type="protein sequence ID" value="BAG37285.1"/>
    <property type="molecule type" value="mRNA"/>
</dbReference>
<dbReference type="EMBL" id="AK316378">
    <property type="protein sequence ID" value="BAH14749.1"/>
    <property type="molecule type" value="mRNA"/>
</dbReference>
<dbReference type="EMBL" id="AF196972">
    <property type="status" value="NOT_ANNOTATED_CDS"/>
    <property type="molecule type" value="Genomic_DNA"/>
</dbReference>
<dbReference type="EMBL" id="CH471224">
    <property type="protein sequence ID" value="EAW50780.1"/>
    <property type="molecule type" value="Genomic_DNA"/>
</dbReference>
<dbReference type="EMBL" id="BC019080">
    <property type="protein sequence ID" value="AAH19080.1"/>
    <property type="molecule type" value="mRNA"/>
</dbReference>
<dbReference type="EMBL" id="L08239">
    <property type="protein sequence ID" value="AAA74510.1"/>
    <property type="status" value="ALT_SEQ"/>
    <property type="molecule type" value="mRNA"/>
</dbReference>
<dbReference type="CCDS" id="CCDS14296.1">
    <molecule id="Q9H237-4"/>
</dbReference>
<dbReference type="CCDS" id="CCDS14297.1">
    <molecule id="Q9H237-2"/>
</dbReference>
<dbReference type="CCDS" id="CCDS14298.1">
    <molecule id="Q9H237-3"/>
</dbReference>
<dbReference type="CCDS" id="CCDS14299.1">
    <molecule id="Q9H237-1"/>
</dbReference>
<dbReference type="RefSeq" id="NP_001269096.1">
    <molecule id="Q9H237-5"/>
    <property type="nucleotide sequence ID" value="NM_001282167.2"/>
</dbReference>
<dbReference type="RefSeq" id="NP_073736.2">
    <molecule id="Q9H237-4"/>
    <property type="nucleotide sequence ID" value="NM_022825.3"/>
</dbReference>
<dbReference type="RefSeq" id="NP_982299.1">
    <molecule id="Q9H237-2"/>
    <property type="nucleotide sequence ID" value="NM_203473.3"/>
</dbReference>
<dbReference type="RefSeq" id="NP_982300.1">
    <molecule id="Q9H237-3"/>
    <property type="nucleotide sequence ID" value="NM_203474.1"/>
</dbReference>
<dbReference type="RefSeq" id="NP_982301.1">
    <molecule id="Q9H237-1"/>
    <property type="nucleotide sequence ID" value="NM_203475.3"/>
</dbReference>
<dbReference type="RefSeq" id="XP_006724609.1">
    <property type="nucleotide sequence ID" value="XM_006724546.3"/>
</dbReference>
<dbReference type="RefSeq" id="XP_011542250.1">
    <property type="nucleotide sequence ID" value="XM_011543948.2"/>
</dbReference>
<dbReference type="RefSeq" id="XP_016885225.1">
    <property type="nucleotide sequence ID" value="XM_017029736.1"/>
</dbReference>
<dbReference type="RefSeq" id="XP_047298326.1">
    <molecule id="Q9H237-1"/>
    <property type="nucleotide sequence ID" value="XM_047442370.1"/>
</dbReference>
<dbReference type="RefSeq" id="XP_047298328.1">
    <molecule id="Q9H237-5"/>
    <property type="nucleotide sequence ID" value="XM_047442372.1"/>
</dbReference>
<dbReference type="RefSeq" id="XP_054183564.1">
    <molecule id="Q9H237-1"/>
    <property type="nucleotide sequence ID" value="XM_054327589.1"/>
</dbReference>
<dbReference type="RefSeq" id="XP_054183566.1">
    <molecule id="Q9H237-5"/>
    <property type="nucleotide sequence ID" value="XM_054327591.1"/>
</dbReference>
<dbReference type="PDB" id="7URA">
    <property type="method" value="EM"/>
    <property type="resolution" value="3.11 A"/>
    <property type="chains" value="A=2-461"/>
</dbReference>
<dbReference type="PDB" id="7URC">
    <property type="method" value="EM"/>
    <property type="resolution" value="3.14 A"/>
    <property type="chains" value="A=2-461"/>
</dbReference>
<dbReference type="PDB" id="7URD">
    <property type="method" value="EM"/>
    <property type="resolution" value="2.92 A"/>
    <property type="chains" value="A=2-461"/>
</dbReference>
<dbReference type="PDB" id="7URE">
    <property type="method" value="EM"/>
    <property type="resolution" value="3.19 A"/>
    <property type="chains" value="A=2-461"/>
</dbReference>
<dbReference type="PDBsum" id="7URA"/>
<dbReference type="PDBsum" id="7URC"/>
<dbReference type="PDBsum" id="7URD"/>
<dbReference type="PDBsum" id="7URE"/>
<dbReference type="EMDB" id="EMD-26707"/>
<dbReference type="EMDB" id="EMD-26708"/>
<dbReference type="EMDB" id="EMD-26709"/>
<dbReference type="EMDB" id="EMD-26710"/>
<dbReference type="SMR" id="Q9H237"/>
<dbReference type="BioGRID" id="122316">
    <property type="interactions" value="7"/>
</dbReference>
<dbReference type="FunCoup" id="Q9H237">
    <property type="interactions" value="728"/>
</dbReference>
<dbReference type="IntAct" id="Q9H237">
    <property type="interactions" value="3"/>
</dbReference>
<dbReference type="STRING" id="9606.ENSP00000322304"/>
<dbReference type="BindingDB" id="Q9H237"/>
<dbReference type="ChEMBL" id="CHEMBL1255163"/>
<dbReference type="DrugBank" id="DB12561">
    <property type="generic name" value="WNT-974"/>
</dbReference>
<dbReference type="GuidetoPHARMACOLOGY" id="3145"/>
<dbReference type="TCDB" id="2.A.50.3.1">
    <property type="family name" value="the glycerol uptake (gup) or membrane-bound acyl transferase (mboat) family"/>
</dbReference>
<dbReference type="iPTMnet" id="Q9H237"/>
<dbReference type="PhosphoSitePlus" id="Q9H237"/>
<dbReference type="BioMuta" id="PORCN"/>
<dbReference type="DMDM" id="116242723"/>
<dbReference type="MassIVE" id="Q9H237"/>
<dbReference type="PaxDb" id="9606-ENSP00000322304"/>
<dbReference type="PeptideAtlas" id="Q9H237"/>
<dbReference type="ProteomicsDB" id="7081"/>
<dbReference type="ProteomicsDB" id="80481">
    <molecule id="Q9H237-1"/>
</dbReference>
<dbReference type="ProteomicsDB" id="80482">
    <molecule id="Q9H237-2"/>
</dbReference>
<dbReference type="ProteomicsDB" id="80483">
    <molecule id="Q9H237-3"/>
</dbReference>
<dbReference type="ProteomicsDB" id="80484">
    <molecule id="Q9H237-4"/>
</dbReference>
<dbReference type="Pumba" id="Q9H237"/>
<dbReference type="Antibodypedia" id="25667">
    <property type="antibodies" value="106 antibodies from 21 providers"/>
</dbReference>
<dbReference type="DNASU" id="64840"/>
<dbReference type="Ensembl" id="ENST00000326194.11">
    <molecule id="Q9H237-1"/>
    <property type="protein sequence ID" value="ENSP00000322304.6"/>
    <property type="gene ID" value="ENSG00000102312.24"/>
</dbReference>
<dbReference type="Ensembl" id="ENST00000355961.8">
    <molecule id="Q9H237-2"/>
    <property type="protein sequence ID" value="ENSP00000348233.4"/>
    <property type="gene ID" value="ENSG00000102312.24"/>
</dbReference>
<dbReference type="Ensembl" id="ENST00000359882.8">
    <molecule id="Q9H237-3"/>
    <property type="protein sequence ID" value="ENSP00000352946.4"/>
    <property type="gene ID" value="ENSG00000102312.24"/>
</dbReference>
<dbReference type="Ensembl" id="ENST00000361988.7">
    <molecule id="Q9H237-4"/>
    <property type="protein sequence ID" value="ENSP00000354978.3"/>
    <property type="gene ID" value="ENSG00000102312.24"/>
</dbReference>
<dbReference type="Ensembl" id="ENST00000367574.9">
    <molecule id="Q9H237-4"/>
    <property type="protein sequence ID" value="ENSP00000356546.6"/>
    <property type="gene ID" value="ENSG00000102312.24"/>
</dbReference>
<dbReference type="Ensembl" id="ENST00000537758.6">
    <molecule id="Q9H237-4"/>
    <property type="protein sequence ID" value="ENSP00000446401.3"/>
    <property type="gene ID" value="ENSG00000102312.24"/>
</dbReference>
<dbReference type="Ensembl" id="ENST00000683923.1">
    <molecule id="Q9H237-4"/>
    <property type="protein sequence ID" value="ENSP00000506737.1"/>
    <property type="gene ID" value="ENSG00000102312.24"/>
</dbReference>
<dbReference type="GeneID" id="64840"/>
<dbReference type="KEGG" id="hsa:64840"/>
<dbReference type="MANE-Select" id="ENST00000326194.11">
    <property type="protein sequence ID" value="ENSP00000322304.6"/>
    <property type="RefSeq nucleotide sequence ID" value="NM_203475.3"/>
    <property type="RefSeq protein sequence ID" value="NP_982301.1"/>
</dbReference>
<dbReference type="UCSC" id="uc004djr.3">
    <molecule id="Q9H237-1"/>
    <property type="organism name" value="human"/>
</dbReference>
<dbReference type="AGR" id="HGNC:17652"/>
<dbReference type="CTD" id="64840"/>
<dbReference type="DisGeNET" id="64840"/>
<dbReference type="GeneCards" id="PORCN"/>
<dbReference type="GeneReviews" id="PORCN"/>
<dbReference type="HGNC" id="HGNC:17652">
    <property type="gene designation" value="PORCN"/>
</dbReference>
<dbReference type="HPA" id="ENSG00000102312">
    <property type="expression patterns" value="Tissue enhanced (adrenal)"/>
</dbReference>
<dbReference type="MalaCards" id="PORCN"/>
<dbReference type="MIM" id="300651">
    <property type="type" value="gene"/>
</dbReference>
<dbReference type="MIM" id="305600">
    <property type="type" value="phenotype"/>
</dbReference>
<dbReference type="neXtProt" id="NX_Q9H237"/>
<dbReference type="OpenTargets" id="ENSG00000102312"/>
<dbReference type="Orphanet" id="98938">
    <property type="disease" value="Colobomatous microphthalmia"/>
</dbReference>
<dbReference type="Orphanet" id="2092">
    <property type="disease" value="Focal dermal hypoplasia"/>
</dbReference>
<dbReference type="PharmGKB" id="PA134906089"/>
<dbReference type="VEuPathDB" id="HostDB:ENSG00000102312"/>
<dbReference type="eggNOG" id="KOG4312">
    <property type="taxonomic scope" value="Eukaryota"/>
</dbReference>
<dbReference type="GeneTree" id="ENSGT01030000234564"/>
<dbReference type="InParanoid" id="Q9H237"/>
<dbReference type="OMA" id="WRQRSDW"/>
<dbReference type="OrthoDB" id="5968863at2759"/>
<dbReference type="PAN-GO" id="Q9H237">
    <property type="GO annotations" value="7 GO annotations based on evolutionary models"/>
</dbReference>
<dbReference type="PhylomeDB" id="Q9H237"/>
<dbReference type="TreeFam" id="TF313724"/>
<dbReference type="BRENDA" id="2.3.1.250">
    <property type="organism ID" value="2681"/>
</dbReference>
<dbReference type="PathwayCommons" id="Q9H237"/>
<dbReference type="Reactome" id="R-HSA-3238698">
    <property type="pathway name" value="WNT ligand biogenesis and trafficking"/>
</dbReference>
<dbReference type="Reactome" id="R-HSA-5340573">
    <property type="pathway name" value="LGK974 inhibits PORCN"/>
</dbReference>
<dbReference type="SignaLink" id="Q9H237"/>
<dbReference type="SIGNOR" id="Q9H237"/>
<dbReference type="BioGRID-ORCS" id="64840">
    <property type="hits" value="19 hits in 779 CRISPR screens"/>
</dbReference>
<dbReference type="ChiTaRS" id="PORCN">
    <property type="organism name" value="human"/>
</dbReference>
<dbReference type="GenomeRNAi" id="64840"/>
<dbReference type="Pharos" id="Q9H237">
    <property type="development level" value="Tchem"/>
</dbReference>
<dbReference type="PRO" id="PR:Q9H237"/>
<dbReference type="Proteomes" id="UP000005640">
    <property type="component" value="Chromosome X"/>
</dbReference>
<dbReference type="RNAct" id="Q9H237">
    <property type="molecule type" value="protein"/>
</dbReference>
<dbReference type="Bgee" id="ENSG00000102312">
    <property type="expression patterns" value="Expressed in lower esophagus mucosa and 111 other cell types or tissues"/>
</dbReference>
<dbReference type="ExpressionAtlas" id="Q9H237">
    <property type="expression patterns" value="baseline and differential"/>
</dbReference>
<dbReference type="GO" id="GO:0032281">
    <property type="term" value="C:AMPA glutamate receptor complex"/>
    <property type="evidence" value="ECO:0007669"/>
    <property type="project" value="Ensembl"/>
</dbReference>
<dbReference type="GO" id="GO:0005783">
    <property type="term" value="C:endoplasmic reticulum"/>
    <property type="evidence" value="ECO:0000250"/>
    <property type="project" value="UniProtKB"/>
</dbReference>
<dbReference type="GO" id="GO:0005789">
    <property type="term" value="C:endoplasmic reticulum membrane"/>
    <property type="evidence" value="ECO:0000304"/>
    <property type="project" value="Reactome"/>
</dbReference>
<dbReference type="GO" id="GO:0098978">
    <property type="term" value="C:glutamatergic synapse"/>
    <property type="evidence" value="ECO:0007669"/>
    <property type="project" value="Ensembl"/>
</dbReference>
<dbReference type="GO" id="GO:0016020">
    <property type="term" value="C:membrane"/>
    <property type="evidence" value="ECO:0000318"/>
    <property type="project" value="GO_Central"/>
</dbReference>
<dbReference type="GO" id="GO:1990698">
    <property type="term" value="F:palmitoleoyltransferase activity"/>
    <property type="evidence" value="ECO:0000250"/>
    <property type="project" value="UniProtKB"/>
</dbReference>
<dbReference type="GO" id="GO:0017147">
    <property type="term" value="F:Wnt-protein binding"/>
    <property type="evidence" value="ECO:0000318"/>
    <property type="project" value="GO_Central"/>
</dbReference>
<dbReference type="GO" id="GO:0009100">
    <property type="term" value="P:glycoprotein metabolic process"/>
    <property type="evidence" value="ECO:0007669"/>
    <property type="project" value="Ensembl"/>
</dbReference>
<dbReference type="GO" id="GO:0030258">
    <property type="term" value="P:lipid modification"/>
    <property type="evidence" value="ECO:0000318"/>
    <property type="project" value="GO_Central"/>
</dbReference>
<dbReference type="GO" id="GO:0006497">
    <property type="term" value="P:protein lipidation"/>
    <property type="evidence" value="ECO:0000250"/>
    <property type="project" value="UniProtKB"/>
</dbReference>
<dbReference type="GO" id="GO:0045234">
    <property type="term" value="P:protein palmitoleylation"/>
    <property type="evidence" value="ECO:0000250"/>
    <property type="project" value="UniProtKB"/>
</dbReference>
<dbReference type="GO" id="GO:0099072">
    <property type="term" value="P:regulation of postsynaptic membrane neurotransmitter receptor levels"/>
    <property type="evidence" value="ECO:0007669"/>
    <property type="project" value="Ensembl"/>
</dbReference>
<dbReference type="GO" id="GO:0061355">
    <property type="term" value="P:Wnt protein secretion"/>
    <property type="evidence" value="ECO:0000318"/>
    <property type="project" value="GO_Central"/>
</dbReference>
<dbReference type="GO" id="GO:0016055">
    <property type="term" value="P:Wnt signaling pathway"/>
    <property type="evidence" value="ECO:0000250"/>
    <property type="project" value="UniProtKB"/>
</dbReference>
<dbReference type="InterPro" id="IPR049941">
    <property type="entry name" value="LPLAT_7/PORCN-like"/>
</dbReference>
<dbReference type="InterPro" id="IPR004299">
    <property type="entry name" value="MBOAT_fam"/>
</dbReference>
<dbReference type="PANTHER" id="PTHR13906">
    <property type="entry name" value="PORCUPINE"/>
    <property type="match status" value="1"/>
</dbReference>
<dbReference type="PANTHER" id="PTHR13906:SF12">
    <property type="entry name" value="PROTEIN-SERINE O-PALMITOLEOYLTRANSFERASE PORCUPINE"/>
    <property type="match status" value="1"/>
</dbReference>
<dbReference type="Pfam" id="PF03062">
    <property type="entry name" value="MBOAT"/>
    <property type="match status" value="1"/>
</dbReference>
<name>PORCN_HUMAN</name>
<gene>
    <name evidence="18" type="primary">PORCN</name>
    <name evidence="14" type="synonym">MG61</name>
    <name type="synonym">PORC</name>
    <name type="synonym">PPN</name>
</gene>
<feature type="chain" id="PRO_0000213137" description="Protein-serine O-palmitoleoyltransferase porcupine">
    <location>
        <begin position="1"/>
        <end position="461"/>
    </location>
</feature>
<feature type="topological domain" description="Cytoplasmic" evidence="2">
    <location>
        <begin position="1"/>
        <end position="17"/>
    </location>
</feature>
<feature type="transmembrane region" description="Helical" evidence="2">
    <location>
        <begin position="18"/>
        <end position="38"/>
    </location>
</feature>
<feature type="topological domain" description="Extracellular" evidence="2">
    <location>
        <begin position="39"/>
        <end position="66"/>
    </location>
</feature>
<feature type="transmembrane region" description="Helical" evidence="2">
    <location>
        <begin position="67"/>
        <end position="87"/>
    </location>
</feature>
<feature type="topological domain" description="Cytoplasmic" evidence="2">
    <location>
        <begin position="88"/>
        <end position="95"/>
    </location>
</feature>
<feature type="transmembrane region" description="Helical" evidence="2">
    <location>
        <begin position="96"/>
        <end position="116"/>
    </location>
</feature>
<feature type="topological domain" description="Extracellular" evidence="2">
    <location>
        <begin position="117"/>
        <end position="152"/>
    </location>
</feature>
<feature type="transmembrane region" description="Helical" evidence="2">
    <location>
        <begin position="153"/>
        <end position="173"/>
    </location>
</feature>
<feature type="topological domain" description="Cytoplasmic" evidence="2">
    <location>
        <begin position="174"/>
        <end position="198"/>
    </location>
</feature>
<feature type="transmembrane region" description="Helical" evidence="2">
    <location>
        <begin position="199"/>
        <end position="219"/>
    </location>
</feature>
<feature type="topological domain" description="Extracellular" evidence="2">
    <location>
        <begin position="220"/>
        <end position="252"/>
    </location>
</feature>
<feature type="transmembrane region" description="Helical" evidence="2">
    <location>
        <begin position="253"/>
        <end position="273"/>
    </location>
</feature>
<feature type="topological domain" description="Cytoplasmic" evidence="2">
    <location>
        <begin position="274"/>
        <end position="337"/>
    </location>
</feature>
<feature type="transmembrane region" description="Helical" evidence="2">
    <location>
        <begin position="338"/>
        <end position="358"/>
    </location>
</feature>
<feature type="topological domain" description="Extracellular" evidence="2">
    <location>
        <begin position="359"/>
        <end position="396"/>
    </location>
</feature>
<feature type="transmembrane region" description="Helical" evidence="2">
    <location>
        <begin position="397"/>
        <end position="417"/>
    </location>
</feature>
<feature type="topological domain" description="Cytoplasmic" evidence="2">
    <location>
        <begin position="418"/>
        <end position="461"/>
    </location>
</feature>
<feature type="active site" evidence="13">
    <location>
        <position position="341"/>
    </location>
</feature>
<feature type="lipid moiety-binding region" description="S-palmitoyl cysteine" evidence="13">
    <location>
        <position position="187"/>
    </location>
</feature>
<feature type="splice variant" id="VSP_055419" description="In isoform 5." evidence="15">
    <location>
        <begin position="1"/>
        <end position="71"/>
    </location>
</feature>
<feature type="splice variant" id="VSP_015886" description="In isoform 4 and isoform 5." evidence="14 15">
    <original>NKKRKARGTMVR</original>
    <variation>K</variation>
    <location>
        <begin position="229"/>
        <end position="240"/>
    </location>
</feature>
<feature type="splice variant" id="VSP_015887" description="In isoform 3." evidence="14">
    <original>NKKRKAR</original>
    <variation>K</variation>
    <location>
        <begin position="229"/>
        <end position="235"/>
    </location>
</feature>
<feature type="splice variant" id="VSP_015888" description="In isoform 2." evidence="14 16">
    <location>
        <begin position="235"/>
        <end position="239"/>
    </location>
</feature>
<feature type="sequence variant" id="VAR_035089" description="In FODH; dbSNP:rs267606973." evidence="4">
    <original>G</original>
    <variation>R</variation>
    <location>
        <position position="60"/>
    </location>
</feature>
<feature type="sequence variant" id="VAR_058899" description="In FODH." evidence="8">
    <original>S</original>
    <variation>F</variation>
    <location>
        <position position="136"/>
    </location>
</feature>
<feature type="sequence variant" id="VAR_058900" description="In FODH; dbSNP:rs1602072227." evidence="8 9">
    <original>G</original>
    <variation>R</variation>
    <location>
        <position position="168"/>
    </location>
</feature>
<feature type="sequence variant" id="VAR_058901" description="In a patient with focal dermal hypoplasia also carrying a frameshift mutation; uncertain significance; dbSNP:rs1556974235." evidence="6">
    <original>R</original>
    <variation>C</variation>
    <location>
        <position position="228"/>
    </location>
</feature>
<feature type="sequence variant" id="VAR_065189" description="In FODH." evidence="12">
    <original>H</original>
    <variation>Y</variation>
    <location>
        <position position="252"/>
    </location>
</feature>
<feature type="sequence variant" id="VAR_058902" description="In FODH." evidence="8">
    <original>V</original>
    <variation>E</variation>
    <location>
        <position position="258"/>
    </location>
</feature>
<feature type="sequence variant" id="VAR_065190" description="In FODH." evidence="9">
    <original>S</original>
    <variation>L</variation>
    <location>
        <position position="297"/>
    </location>
</feature>
<feature type="sequence variant" id="VAR_065191" description="In FODH." evidence="10">
    <original>L</original>
    <variation>R</variation>
    <location>
        <position position="331"/>
    </location>
</feature>
<feature type="sequence variant" id="VAR_058903" description="In FODH." evidence="8">
    <original>H</original>
    <variation>L</variation>
    <location>
        <position position="341"/>
    </location>
</feature>
<feature type="sequence variant" id="VAR_065192" description="In FODH." evidence="7">
    <original>E</original>
    <variation>V</variation>
    <location>
        <position position="361"/>
    </location>
</feature>
<feature type="sequence variant" id="VAR_035090" description="In FODH." evidence="4 8">
    <original>R</original>
    <variation>G</variation>
    <location>
        <position position="365"/>
    </location>
</feature>
<feature type="sequence variant" id="VAR_058904" description="In FODH; dbSNP:rs2061714949." evidence="6 8 9 10 12">
    <original>R</original>
    <variation>Q</variation>
    <location>
        <position position="365"/>
    </location>
</feature>
<feature type="sequence variant" id="VAR_066061" description="In FODH." evidence="9">
    <original>A</original>
    <variation>P</variation>
    <location>
        <position position="374"/>
    </location>
</feature>
<feature type="sequence variant" id="VAR_058905" description="In FODH." evidence="8">
    <original>C</original>
    <variation>R</variation>
    <location>
        <position position="385"/>
    </location>
</feature>
<feature type="sequence variant" id="VAR_065193" description="In FODH." evidence="7">
    <original>C</original>
    <variation>Y</variation>
    <location>
        <position position="385"/>
    </location>
</feature>
<feature type="sequence variant" id="VAR_058906" description="In FODH." evidence="8">
    <original>W</original>
    <variation>R</variation>
    <location>
        <position position="439"/>
    </location>
</feature>
<feature type="mutagenesis site" description="Drastic loss of palmitoylation." evidence="13">
    <original>C</original>
    <variation>A</variation>
    <location>
        <position position="187"/>
    </location>
</feature>
<feature type="mutagenesis site" description="Loss of function." evidence="13">
    <original>H</original>
    <variation>A</variation>
    <location>
        <position position="341"/>
    </location>
</feature>
<feature type="sequence conflict" description="In Ref. 1; AAG39631." evidence="17" ref="1">
    <original>L</original>
    <variation>P</variation>
    <location>
        <position position="42"/>
    </location>
</feature>
<feature type="sequence conflict" description="In Ref. 1; AAG39628/AAG39630." evidence="17" ref="1">
    <original>A</original>
    <variation>T</variation>
    <location>
        <position position="179"/>
    </location>
</feature>
<feature type="helix" evidence="21">
    <location>
        <begin position="6"/>
        <end position="27"/>
    </location>
</feature>
<feature type="helix" evidence="21">
    <location>
        <begin position="30"/>
        <end position="42"/>
    </location>
</feature>
<feature type="helix" evidence="21">
    <location>
        <begin position="49"/>
        <end position="67"/>
    </location>
</feature>
<feature type="turn" evidence="21">
    <location>
        <begin position="69"/>
        <end position="72"/>
    </location>
</feature>
<feature type="helix" evidence="21">
    <location>
        <begin position="73"/>
        <end position="88"/>
    </location>
</feature>
<feature type="turn" evidence="19">
    <location>
        <begin position="89"/>
        <end position="91"/>
    </location>
</feature>
<feature type="helix" evidence="21">
    <location>
        <begin position="95"/>
        <end position="110"/>
    </location>
</feature>
<feature type="turn" evidence="21">
    <location>
        <begin position="111"/>
        <end position="114"/>
    </location>
</feature>
<feature type="helix" evidence="21">
    <location>
        <begin position="117"/>
        <end position="122"/>
    </location>
</feature>
<feature type="helix" evidence="21">
    <location>
        <begin position="124"/>
        <end position="142"/>
    </location>
</feature>
<feature type="helix" evidence="21">
    <location>
        <begin position="152"/>
        <end position="159"/>
    </location>
</feature>
<feature type="strand" evidence="21">
    <location>
        <begin position="164"/>
        <end position="167"/>
    </location>
</feature>
<feature type="helix" evidence="21">
    <location>
        <begin position="173"/>
        <end position="180"/>
    </location>
</feature>
<feature type="helix" evidence="21">
    <location>
        <begin position="187"/>
        <end position="208"/>
    </location>
</feature>
<feature type="turn" evidence="21">
    <location>
        <begin position="209"/>
        <end position="213"/>
    </location>
</feature>
<feature type="helix" evidence="21">
    <location>
        <begin position="214"/>
        <end position="218"/>
    </location>
</feature>
<feature type="helix" evidence="21">
    <location>
        <begin position="241"/>
        <end position="268"/>
    </location>
</feature>
<feature type="strand" evidence="19">
    <location>
        <begin position="274"/>
        <end position="278"/>
    </location>
</feature>
<feature type="strand" evidence="20">
    <location>
        <begin position="279"/>
        <end position="281"/>
    </location>
</feature>
<feature type="helix" evidence="21">
    <location>
        <begin position="290"/>
        <end position="293"/>
    </location>
</feature>
<feature type="helix" evidence="21">
    <location>
        <begin position="298"/>
        <end position="305"/>
    </location>
</feature>
<feature type="helix" evidence="21">
    <location>
        <begin position="307"/>
        <end position="316"/>
    </location>
</feature>
<feature type="helix" evidence="21">
    <location>
        <begin position="318"/>
        <end position="321"/>
    </location>
</feature>
<feature type="helix" evidence="21">
    <location>
        <begin position="322"/>
        <end position="324"/>
    </location>
</feature>
<feature type="helix" evidence="21">
    <location>
        <begin position="326"/>
        <end position="340"/>
    </location>
</feature>
<feature type="helix" evidence="21">
    <location>
        <begin position="345"/>
        <end position="371"/>
    </location>
</feature>
<feature type="strand" evidence="20">
    <location>
        <begin position="377"/>
        <end position="379"/>
    </location>
</feature>
<feature type="strand" evidence="21">
    <location>
        <begin position="388"/>
        <end position="391"/>
    </location>
</feature>
<feature type="helix" evidence="21">
    <location>
        <begin position="393"/>
        <end position="414"/>
    </location>
</feature>
<feature type="helix" evidence="21">
    <location>
        <begin position="415"/>
        <end position="417"/>
    </location>
</feature>
<feature type="helix" evidence="21">
    <location>
        <begin position="432"/>
        <end position="440"/>
    </location>
</feature>
<feature type="turn" evidence="21">
    <location>
        <begin position="441"/>
        <end position="444"/>
    </location>
</feature>
<feature type="helix" evidence="21">
    <location>
        <begin position="445"/>
        <end position="459"/>
    </location>
</feature>
<accession>Q9H237</accession>
<accession>B2RBN8</accession>
<accession>B7ZAR3</accession>
<accession>Q14829</accession>
<accession>Q9H234</accession>
<accession>Q9H235</accession>
<accession>Q9H236</accession>
<accession>Q9UJU7</accession>
<comment type="function">
    <text evidence="1 3 11 13">Protein-serine O-palmitoleoyltransferase that acts as a key regulator of the Wnt signaling pathway by mediating the attachment of palmitoleate, a 16-carbon monounsaturated fatty acid (C16:1(9Z)), to Wnt proteins. Serine palmitoleoylation of WNT proteins is required for efficient binding to frizzled receptors.</text>
</comment>
<comment type="catalytic activity">
    <reaction evidence="1">
        <text>[Wnt protein]-L-serine + (9Z)-hexadecenoyl-CoA = [Wnt protein]-O-(9Z)-hexadecenoyl-L-serine + CoA</text>
        <dbReference type="Rhea" id="RHEA:45336"/>
        <dbReference type="Rhea" id="RHEA-COMP:11170"/>
        <dbReference type="Rhea" id="RHEA-COMP:11171"/>
        <dbReference type="ChEBI" id="CHEBI:29999"/>
        <dbReference type="ChEBI" id="CHEBI:57287"/>
        <dbReference type="ChEBI" id="CHEBI:61540"/>
        <dbReference type="ChEBI" id="CHEBI:85189"/>
        <dbReference type="EC" id="2.3.1.250"/>
    </reaction>
</comment>
<comment type="subunit">
    <text evidence="1">Interacts with WNT1, WNT3, WNT3A, WNT4, WNT5A, WNT5B, WNT6, WNT7A and WNT7B.</text>
</comment>
<comment type="interaction">
    <interactant intactId="EBI-18254170">
        <id>Q9H237-2</id>
    </interactant>
    <interactant intactId="EBI-18302142">
        <id>P55056</id>
        <label>APOC4</label>
    </interactant>
    <organismsDiffer>false</organismsDiffer>
    <experiments>3</experiments>
</comment>
<comment type="interaction">
    <interactant intactId="EBI-18254170">
        <id>Q9H237-2</id>
    </interactant>
    <interactant intactId="EBI-19051169">
        <id>Q8N350-4</id>
        <label>CBARP</label>
    </interactant>
    <organismsDiffer>false</organismsDiffer>
    <experiments>3</experiments>
</comment>
<comment type="subcellular location">
    <subcellularLocation>
        <location evidence="1">Endoplasmic reticulum membrane</location>
        <topology evidence="1">Multi-pass membrane protein</topology>
    </subcellularLocation>
</comment>
<comment type="alternative products">
    <event type="alternative splicing"/>
    <isoform>
        <id>Q9H237-1</id>
        <name>1</name>
        <name>D</name>
        <sequence type="displayed"/>
    </isoform>
    <isoform>
        <id>Q9H237-2</id>
        <name>2</name>
        <name>B</name>
        <sequence type="described" ref="VSP_015888"/>
    </isoform>
    <isoform>
        <id>Q9H237-3</id>
        <name>3</name>
        <name>C</name>
        <sequence type="described" ref="VSP_015887"/>
    </isoform>
    <isoform>
        <id>Q9H237-4</id>
        <name>4</name>
        <name>A</name>
        <sequence type="described" ref="VSP_015886"/>
    </isoform>
    <isoform>
        <id>Q9H237-5</id>
        <name>5</name>
        <sequence type="described" ref="VSP_055419 VSP_015886"/>
    </isoform>
</comment>
<comment type="tissue specificity">
    <text evidence="3">Isoform 1 is expressed in fetal brain, brain, amygdala, caudate nucleus, cerebellum, hippocampus, pituitary, thalamus, heart, skeletal muscle and testis. Isoform 4 is expressed in amygdala, corpus callosum, hippocampus, spinal cord, kidney, liver, lung, spleen, uterus, testis. Isoform 2 and isoform 3 are expressed in substantia negra, spinal cord, heart and lung.</text>
</comment>
<comment type="disease" evidence="4 5 6 7 8 9 10 12">
    <disease id="DI-01619">
        <name>Focal dermal hypoplasia</name>
        <acronym>FODH</acronym>
        <description>A rare congenital ectomesodermal disorder characterized by a combination of skin defects, skeletal abnormalities, and ocular anomalies. Affected individuals have patchy dermal hypoplasia, often in a distribution pattern following the Blaschko lines, and areas of subcutaneous fat herniation or deposition of fat into the dermis. In addition, sparse and brittle hair, hypoplastic nails and papillomas have been described. Skeletal abnormalities usually comprise syndactyly, ectrodactyly, and brachydactyly, and in some cases osteopathia striata has been seen. Patients frequently have ocular anomalies, including microphthalmia/ anophthalmia, coloboma, pigmentary and vascularization defects of the retina. Dental abnormalities are often present.</description>
        <dbReference type="MIM" id="305600"/>
    </disease>
    <text>The disease is caused by variants affecting the gene represented in this entry.</text>
</comment>
<comment type="similarity">
    <text evidence="17">Belongs to the membrane-bound acyltransferase family. Porcupine subfamily.</text>
</comment>
<comment type="caution">
    <text evidence="13">Was initially thought to mediate palmitoylation of Wnt proteins (PubMed:24292069). It was later shown that instead it acts as a serine O-palmitoleoyltransferase that mediates the attachment of palmitoleate, a 16-carbon monounsaturated fatty acid (C16:1), to Wnt proteins.</text>
</comment>
<comment type="sequence caution" evidence="17">
    <conflict type="miscellaneous discrepancy">
        <sequence resource="EMBL-CDS" id="AAA74510"/>
    </conflict>
    <text>The sequence differs from that shown upstream of position 63 for unknown reasons.</text>
</comment>
<comment type="online information" name="Leiden Open Variation Database">
    <link uri="https://databases.lovd.nl/shared/genes/PORCN"/>
    <text>Porcupine homolog (Drosophila) (PORCN)</text>
</comment>
<organism>
    <name type="scientific">Homo sapiens</name>
    <name type="common">Human</name>
    <dbReference type="NCBI Taxonomy" id="9606"/>
    <lineage>
        <taxon>Eukaryota</taxon>
        <taxon>Metazoa</taxon>
        <taxon>Chordata</taxon>
        <taxon>Craniata</taxon>
        <taxon>Vertebrata</taxon>
        <taxon>Euteleostomi</taxon>
        <taxon>Mammalia</taxon>
        <taxon>Eutheria</taxon>
        <taxon>Euarchontoglires</taxon>
        <taxon>Primates</taxon>
        <taxon>Haplorrhini</taxon>
        <taxon>Catarrhini</taxon>
        <taxon>Hominidae</taxon>
        <taxon>Homo</taxon>
    </lineage>
</organism>
<evidence type="ECO:0000250" key="1">
    <source>
        <dbReference type="UniProtKB" id="Q9JJJ7"/>
    </source>
</evidence>
<evidence type="ECO:0000255" key="2"/>
<evidence type="ECO:0000269" key="3">
    <source>
    </source>
</evidence>
<evidence type="ECO:0000269" key="4">
    <source>
    </source>
</evidence>
<evidence type="ECO:0000269" key="5">
    <source>
    </source>
</evidence>
<evidence type="ECO:0000269" key="6">
    <source>
    </source>
</evidence>
<evidence type="ECO:0000269" key="7">
    <source>
    </source>
</evidence>
<evidence type="ECO:0000269" key="8">
    <source>
    </source>
</evidence>
<evidence type="ECO:0000269" key="9">
    <source>
    </source>
</evidence>
<evidence type="ECO:0000269" key="10">
    <source>
    </source>
</evidence>
<evidence type="ECO:0000269" key="11">
    <source>
    </source>
</evidence>
<evidence type="ECO:0000269" key="12">
    <source>
    </source>
</evidence>
<evidence type="ECO:0000269" key="13">
    <source>
    </source>
</evidence>
<evidence type="ECO:0000303" key="14">
    <source>
    </source>
</evidence>
<evidence type="ECO:0000303" key="15">
    <source>
    </source>
</evidence>
<evidence type="ECO:0000303" key="16">
    <source>
    </source>
</evidence>
<evidence type="ECO:0000305" key="17"/>
<evidence type="ECO:0000312" key="18">
    <source>
        <dbReference type="HGNC" id="HGNC:17652"/>
    </source>
</evidence>
<evidence type="ECO:0007829" key="19">
    <source>
        <dbReference type="PDB" id="7URA"/>
    </source>
</evidence>
<evidence type="ECO:0007829" key="20">
    <source>
        <dbReference type="PDB" id="7URC"/>
    </source>
</evidence>
<evidence type="ECO:0007829" key="21">
    <source>
        <dbReference type="PDB" id="7URD"/>
    </source>
</evidence>
<sequence length="461" mass="52318">MATFSRQEFFQQLLQGCLLPTAQQGLDQIWLLLAICLACRLLWRLGLPSYLKHASTVAGGFFSLYHFFQLHMVWVVLLSLLCYLVLFLCRHSSHRGVFLSVTILIYLLMGEMHMVDTVTWHKMRGAQMIVAMKAVSLGFDLDRGEVGTVPSPVEFMGYLYFVGTIVFGPWISFHSYLQAVQGRPLSCRWLQKVARSLALALLCLVLSTCVGPYLFPYFIPLNGDRLLRNKKRKARGTMVRWLRAYESAVSFHFSNYFVGFLSEATATLAGAGFTEEKDHLEWDLTVSKPLNVELPRSMVEVVTSWNLPMSYWLNNYVFKNALRLGTFSAVLVTYAASALLHGFSFHLAAVLLSLAFITYVEHVLRKRLARILSACVLSKRCPPDCSHQHRLGLGVRALNLLFGALAIFHLAYLGSLFDVDVDDTTEEQGYGMAYTVHKWSELSWASHWVTFGCWIFYRLIG</sequence>
<protein>
    <recommendedName>
        <fullName evidence="1">Protein-serine O-palmitoleoyltransferase porcupine</fullName>
        <ecNumber evidence="1">2.3.1.250</ecNumber>
    </recommendedName>
    <alternativeName>
        <fullName evidence="14">Protein MG61</fullName>
    </alternativeName>
</protein>
<keyword id="KW-0002">3D-structure</keyword>
<keyword id="KW-0012">Acyltransferase</keyword>
<keyword id="KW-0025">Alternative splicing</keyword>
<keyword id="KW-0225">Disease variant</keyword>
<keyword id="KW-0256">Endoplasmic reticulum</keyword>
<keyword id="KW-0449">Lipoprotein</keyword>
<keyword id="KW-0472">Membrane</keyword>
<keyword id="KW-0564">Palmitate</keyword>
<keyword id="KW-1267">Proteomics identification</keyword>
<keyword id="KW-1185">Reference proteome</keyword>
<keyword id="KW-0808">Transferase</keyword>
<keyword id="KW-0812">Transmembrane</keyword>
<keyword id="KW-1133">Transmembrane helix</keyword>
<keyword id="KW-0879">Wnt signaling pathway</keyword>